<comment type="function">
    <text evidence="1">Probable aspartic-type endopeptidase which contributes to virulence.</text>
</comment>
<comment type="subcellular location">
    <subcellularLocation>
        <location evidence="5">Secreted</location>
    </subcellularLocation>
</comment>
<comment type="similarity">
    <text evidence="5">Belongs to the peptidase A1 family.</text>
</comment>
<accession>D4DE18</accession>
<keyword id="KW-0064">Aspartyl protease</keyword>
<keyword id="KW-0325">Glycoprotein</keyword>
<keyword id="KW-0378">Hydrolase</keyword>
<keyword id="KW-0645">Protease</keyword>
<keyword id="KW-0964">Secreted</keyword>
<keyword id="KW-0732">Signal</keyword>
<keyword id="KW-0843">Virulence</keyword>
<evidence type="ECO:0000250" key="1"/>
<evidence type="ECO:0000255" key="2"/>
<evidence type="ECO:0000255" key="3">
    <source>
        <dbReference type="PROSITE-ProRule" id="PRU01103"/>
    </source>
</evidence>
<evidence type="ECO:0000255" key="4">
    <source>
        <dbReference type="PROSITE-ProRule" id="PRU10094"/>
    </source>
</evidence>
<evidence type="ECO:0000305" key="5"/>
<organism>
    <name type="scientific">Trichophyton verrucosum (strain HKI 0517)</name>
    <dbReference type="NCBI Taxonomy" id="663202"/>
    <lineage>
        <taxon>Eukaryota</taxon>
        <taxon>Fungi</taxon>
        <taxon>Dikarya</taxon>
        <taxon>Ascomycota</taxon>
        <taxon>Pezizomycotina</taxon>
        <taxon>Eurotiomycetes</taxon>
        <taxon>Eurotiomycetidae</taxon>
        <taxon>Onygenales</taxon>
        <taxon>Arthrodermataceae</taxon>
        <taxon>Trichophyton</taxon>
    </lineage>
</organism>
<reference key="1">
    <citation type="journal article" date="2011" name="Genome Biol.">
        <title>Comparative and functional genomics provide insights into the pathogenicity of dermatophytic fungi.</title>
        <authorList>
            <person name="Burmester A."/>
            <person name="Shelest E."/>
            <person name="Gloeckner G."/>
            <person name="Heddergott C."/>
            <person name="Schindler S."/>
            <person name="Staib P."/>
            <person name="Heidel A."/>
            <person name="Felder M."/>
            <person name="Petzold A."/>
            <person name="Szafranski K."/>
            <person name="Feuermann M."/>
            <person name="Pedruzzi I."/>
            <person name="Priebe S."/>
            <person name="Groth M."/>
            <person name="Winkler R."/>
            <person name="Li W."/>
            <person name="Kniemeyer O."/>
            <person name="Schroeckh V."/>
            <person name="Hertweck C."/>
            <person name="Hube B."/>
            <person name="White T.C."/>
            <person name="Platzer M."/>
            <person name="Guthke R."/>
            <person name="Heitman J."/>
            <person name="Woestemeyer J."/>
            <person name="Zipfel P.F."/>
            <person name="Monod M."/>
            <person name="Brakhage A.A."/>
        </authorList>
    </citation>
    <scope>NUCLEOTIDE SEQUENCE [LARGE SCALE GENOMIC DNA]</scope>
    <source>
        <strain>HKI 0517</strain>
    </source>
</reference>
<feature type="signal peptide" evidence="2">
    <location>
        <begin position="1"/>
        <end position="22"/>
    </location>
</feature>
<feature type="chain" id="PRO_0000406416" description="Probable aspartic-type endopeptidase TRV_05382">
    <location>
        <begin position="23"/>
        <end position="401"/>
    </location>
</feature>
<feature type="domain" description="Peptidase A1" evidence="3">
    <location>
        <begin position="94"/>
        <end position="398"/>
    </location>
</feature>
<feature type="active site" evidence="4">
    <location>
        <position position="110"/>
    </location>
</feature>
<feature type="active site" evidence="4">
    <location>
        <position position="292"/>
    </location>
</feature>
<feature type="glycosylation site" description="N-linked (GlcNAc...) asparagine" evidence="2">
    <location>
        <position position="80"/>
    </location>
</feature>
<feature type="glycosylation site" description="N-linked (GlcNAc...) asparagine" evidence="2">
    <location>
        <position position="102"/>
    </location>
</feature>
<feature type="glycosylation site" description="N-linked (GlcNAc...) asparagine" evidence="2">
    <location>
        <position position="282"/>
    </location>
</feature>
<feature type="glycosylation site" description="N-linked (GlcNAc...) asparagine" evidence="2">
    <location>
        <position position="329"/>
    </location>
</feature>
<protein>
    <recommendedName>
        <fullName>Probable aspartic-type endopeptidase TRV_05382</fullName>
        <ecNumber>3.4.23.-</ecNumber>
    </recommendedName>
</protein>
<proteinExistence type="inferred from homology"/>
<dbReference type="EC" id="3.4.23.-"/>
<dbReference type="EMBL" id="ACYE01000282">
    <property type="protein sequence ID" value="EFE39910.1"/>
    <property type="molecule type" value="Genomic_DNA"/>
</dbReference>
<dbReference type="RefSeq" id="XP_003020528.1">
    <property type="nucleotide sequence ID" value="XM_003020482.1"/>
</dbReference>
<dbReference type="SMR" id="D4DE18"/>
<dbReference type="GeneID" id="9584268"/>
<dbReference type="KEGG" id="tve:TRV_05382"/>
<dbReference type="HOGENOM" id="CLU_013253_0_0_1"/>
<dbReference type="OrthoDB" id="1793at34384"/>
<dbReference type="Proteomes" id="UP000008383">
    <property type="component" value="Unassembled WGS sequence"/>
</dbReference>
<dbReference type="GO" id="GO:0005576">
    <property type="term" value="C:extracellular region"/>
    <property type="evidence" value="ECO:0007669"/>
    <property type="project" value="UniProtKB-SubCell"/>
</dbReference>
<dbReference type="GO" id="GO:0004190">
    <property type="term" value="F:aspartic-type endopeptidase activity"/>
    <property type="evidence" value="ECO:0007669"/>
    <property type="project" value="UniProtKB-KW"/>
</dbReference>
<dbReference type="GO" id="GO:0006508">
    <property type="term" value="P:proteolysis"/>
    <property type="evidence" value="ECO:0007669"/>
    <property type="project" value="UniProtKB-KW"/>
</dbReference>
<dbReference type="CDD" id="cd06097">
    <property type="entry name" value="Aspergillopepsin_like"/>
    <property type="match status" value="1"/>
</dbReference>
<dbReference type="Gene3D" id="2.40.70.10">
    <property type="entry name" value="Acid Proteases"/>
    <property type="match status" value="2"/>
</dbReference>
<dbReference type="InterPro" id="IPR001461">
    <property type="entry name" value="Aspartic_peptidase_A1"/>
</dbReference>
<dbReference type="InterPro" id="IPR001969">
    <property type="entry name" value="Aspartic_peptidase_AS"/>
</dbReference>
<dbReference type="InterPro" id="IPR034163">
    <property type="entry name" value="Aspergillopepsin-like_cat_dom"/>
</dbReference>
<dbReference type="InterPro" id="IPR033121">
    <property type="entry name" value="PEPTIDASE_A1"/>
</dbReference>
<dbReference type="InterPro" id="IPR021109">
    <property type="entry name" value="Peptidase_aspartic_dom_sf"/>
</dbReference>
<dbReference type="PANTHER" id="PTHR47966:SF2">
    <property type="entry name" value="ASPERGILLOPEPSIN-1-RELATED"/>
    <property type="match status" value="1"/>
</dbReference>
<dbReference type="PANTHER" id="PTHR47966">
    <property type="entry name" value="BETA-SITE APP-CLEAVING ENZYME, ISOFORM A-RELATED"/>
    <property type="match status" value="1"/>
</dbReference>
<dbReference type="Pfam" id="PF00026">
    <property type="entry name" value="Asp"/>
    <property type="match status" value="1"/>
</dbReference>
<dbReference type="PRINTS" id="PR00792">
    <property type="entry name" value="PEPSIN"/>
</dbReference>
<dbReference type="SUPFAM" id="SSF50630">
    <property type="entry name" value="Acid proteases"/>
    <property type="match status" value="1"/>
</dbReference>
<dbReference type="PROSITE" id="PS00141">
    <property type="entry name" value="ASP_PROTEASE"/>
    <property type="match status" value="2"/>
</dbReference>
<dbReference type="PROSITE" id="PS51767">
    <property type="entry name" value="PEPTIDASE_A1"/>
    <property type="match status" value="1"/>
</dbReference>
<name>Y5382_TRIVH</name>
<gene>
    <name type="ORF">TRV_05382</name>
</gene>
<sequence length="401" mass="44939">MWHSPFFTAFTLFLGFFTLTLALPTNSLATTGRFTVEQRLIKTFESNWPPKELWRGLRKHHRPLPPAVSRIATHRGPSANGTVKVTPDEYNTEFVNEITIGNNTLFVDIDTGSSDFWVFSSQLPERSQLNHRIYHPEKTGTKLSKQIWEIGYGDGTGAAGNVFLDKASLAGLEVPSQAVQAATWVSYQFADQTVTDGVIGFGFDHFNGVTPKKQKTWFGNIMERLEKPIFTACLKHKAPGFYDFGFIDRTKHIGNPSYLPVDNSRGWWETTFNGFSTGRNDNSTYRFRAVVDTGTTFSLLPREITEQYYSLITGSTFDRENGGWTFPCNTTLPEFAIHINDYKAIVPGEHINWAQIPGTNTCFGGIQSVDRSPAVLGGSFLKSQFVIFDHDGPKMGFAAQR</sequence>